<keyword id="KW-0997">Cell inner membrane</keyword>
<keyword id="KW-1003">Cell membrane</keyword>
<keyword id="KW-0472">Membrane</keyword>
<keyword id="KW-0812">Transmembrane</keyword>
<keyword id="KW-1133">Transmembrane helix</keyword>
<keyword id="KW-0813">Transport</keyword>
<protein>
    <recommendedName>
        <fullName evidence="1">Multidrug resistance protein MdtL</fullName>
    </recommendedName>
</protein>
<sequence length="395" mass="41945">MKRFLLCSFALVLLYPAGIDMYLVGLPRIAADLNASEAQLHIAFSVYLAGMATAMLFAGKIADQSGRKPVAIVGALVFMMASLLCSRASEGSLFLSGRFLQGVGAGGCYVVAFAILRDTLDEHRRAKVLSLLNGITCIVPVLAPVVGHLIMLRFPWQSLFYTMSAMGIIVGLLSLFILRETRPARLAPRDLSRSSPAAESLVNRFFVSRLAITTLSVSVILTFVNASPVLLMEVMGFSRGDYAITMALTAGVSMVVSFSTPFALGLFKPRTLMLVSQGLFLTAGVTLSLAHTNTVTLFGLTLICAGFSVGFGVAMSQALGPFSLRAGVASSTLGIAQVCGSSLWIWLAAILGISAMNMLIGILIGCSIVSILLIFSVAPNRSVAEHEEIPYQSRS</sequence>
<gene>
    <name evidence="1" type="primary">mdtL</name>
    <name type="ordered locus">SeAg_B4071</name>
</gene>
<accession>B5EYX7</accession>
<evidence type="ECO:0000255" key="1">
    <source>
        <dbReference type="HAMAP-Rule" id="MF_01530"/>
    </source>
</evidence>
<feature type="chain" id="PRO_1000200826" description="Multidrug resistance protein MdtL">
    <location>
        <begin position="1"/>
        <end position="395"/>
    </location>
</feature>
<feature type="transmembrane region" description="Helical" evidence="1">
    <location>
        <begin position="4"/>
        <end position="24"/>
    </location>
</feature>
<feature type="transmembrane region" description="Helical" evidence="1">
    <location>
        <begin position="42"/>
        <end position="62"/>
    </location>
</feature>
<feature type="transmembrane region" description="Helical" evidence="1">
    <location>
        <begin position="69"/>
        <end position="89"/>
    </location>
</feature>
<feature type="transmembrane region" description="Helical" evidence="1">
    <location>
        <begin position="93"/>
        <end position="113"/>
    </location>
</feature>
<feature type="transmembrane region" description="Helical" evidence="1">
    <location>
        <begin position="131"/>
        <end position="151"/>
    </location>
</feature>
<feature type="transmembrane region" description="Helical" evidence="1">
    <location>
        <begin position="158"/>
        <end position="178"/>
    </location>
</feature>
<feature type="transmembrane region" description="Helical" evidence="1">
    <location>
        <begin position="217"/>
        <end position="237"/>
    </location>
</feature>
<feature type="transmembrane region" description="Helical" evidence="1">
    <location>
        <begin position="247"/>
        <end position="267"/>
    </location>
</feature>
<feature type="transmembrane region" description="Helical" evidence="1">
    <location>
        <begin position="271"/>
        <end position="291"/>
    </location>
</feature>
<feature type="transmembrane region" description="Helical" evidence="1">
    <location>
        <begin position="295"/>
        <end position="315"/>
    </location>
</feature>
<feature type="transmembrane region" description="Helical" evidence="1">
    <location>
        <begin position="333"/>
        <end position="353"/>
    </location>
</feature>
<feature type="transmembrane region" description="Helical" evidence="1">
    <location>
        <begin position="358"/>
        <end position="378"/>
    </location>
</feature>
<proteinExistence type="inferred from homology"/>
<dbReference type="EMBL" id="CP001138">
    <property type="protein sequence ID" value="ACH52347.1"/>
    <property type="molecule type" value="Genomic_DNA"/>
</dbReference>
<dbReference type="RefSeq" id="WP_000819614.1">
    <property type="nucleotide sequence ID" value="NC_011149.1"/>
</dbReference>
<dbReference type="SMR" id="B5EYX7"/>
<dbReference type="KEGG" id="sea:SeAg_B4071"/>
<dbReference type="HOGENOM" id="CLU_001265_47_1_6"/>
<dbReference type="Proteomes" id="UP000008819">
    <property type="component" value="Chromosome"/>
</dbReference>
<dbReference type="GO" id="GO:0005886">
    <property type="term" value="C:plasma membrane"/>
    <property type="evidence" value="ECO:0007669"/>
    <property type="project" value="UniProtKB-SubCell"/>
</dbReference>
<dbReference type="GO" id="GO:0022857">
    <property type="term" value="F:transmembrane transporter activity"/>
    <property type="evidence" value="ECO:0007669"/>
    <property type="project" value="UniProtKB-UniRule"/>
</dbReference>
<dbReference type="CDD" id="cd17320">
    <property type="entry name" value="MFS_MdfA_MDR_like"/>
    <property type="match status" value="1"/>
</dbReference>
<dbReference type="FunFam" id="1.20.1720.10:FF:000003">
    <property type="entry name" value="Multidrug resistance protein MdtL"/>
    <property type="match status" value="1"/>
</dbReference>
<dbReference type="Gene3D" id="1.20.1720.10">
    <property type="entry name" value="Multidrug resistance protein D"/>
    <property type="match status" value="1"/>
</dbReference>
<dbReference type="HAMAP" id="MF_01530">
    <property type="entry name" value="MFS_MdtL"/>
    <property type="match status" value="1"/>
</dbReference>
<dbReference type="InterPro" id="IPR011701">
    <property type="entry name" value="MFS"/>
</dbReference>
<dbReference type="InterPro" id="IPR020846">
    <property type="entry name" value="MFS_dom"/>
</dbReference>
<dbReference type="InterPro" id="IPR036259">
    <property type="entry name" value="MFS_trans_sf"/>
</dbReference>
<dbReference type="InterPro" id="IPR023697">
    <property type="entry name" value="Multidrug-R_MdtL"/>
</dbReference>
<dbReference type="NCBIfam" id="NF007782">
    <property type="entry name" value="PRK10473.1"/>
    <property type="match status" value="1"/>
</dbReference>
<dbReference type="PANTHER" id="PTHR42718">
    <property type="entry name" value="MAJOR FACILITATOR SUPERFAMILY MULTIDRUG TRANSPORTER MFSC"/>
    <property type="match status" value="1"/>
</dbReference>
<dbReference type="PANTHER" id="PTHR42718:SF9">
    <property type="entry name" value="MAJOR FACILITATOR SUPERFAMILY MULTIDRUG TRANSPORTER MFSC"/>
    <property type="match status" value="1"/>
</dbReference>
<dbReference type="Pfam" id="PF07690">
    <property type="entry name" value="MFS_1"/>
    <property type="match status" value="1"/>
</dbReference>
<dbReference type="SUPFAM" id="SSF103473">
    <property type="entry name" value="MFS general substrate transporter"/>
    <property type="match status" value="1"/>
</dbReference>
<dbReference type="PROSITE" id="PS50850">
    <property type="entry name" value="MFS"/>
    <property type="match status" value="1"/>
</dbReference>
<organism>
    <name type="scientific">Salmonella agona (strain SL483)</name>
    <dbReference type="NCBI Taxonomy" id="454166"/>
    <lineage>
        <taxon>Bacteria</taxon>
        <taxon>Pseudomonadati</taxon>
        <taxon>Pseudomonadota</taxon>
        <taxon>Gammaproteobacteria</taxon>
        <taxon>Enterobacterales</taxon>
        <taxon>Enterobacteriaceae</taxon>
        <taxon>Salmonella</taxon>
    </lineage>
</organism>
<comment type="subcellular location">
    <subcellularLocation>
        <location evidence="1">Cell inner membrane</location>
        <topology evidence="1">Multi-pass membrane protein</topology>
    </subcellularLocation>
</comment>
<comment type="similarity">
    <text evidence="1">Belongs to the major facilitator superfamily. DHA1 family. MdtL (TC 2.A.1.2.22) subfamily.</text>
</comment>
<name>MDTL_SALA4</name>
<reference key="1">
    <citation type="journal article" date="2011" name="J. Bacteriol.">
        <title>Comparative genomics of 28 Salmonella enterica isolates: evidence for CRISPR-mediated adaptive sublineage evolution.</title>
        <authorList>
            <person name="Fricke W.F."/>
            <person name="Mammel M.K."/>
            <person name="McDermott P.F."/>
            <person name="Tartera C."/>
            <person name="White D.G."/>
            <person name="Leclerc J.E."/>
            <person name="Ravel J."/>
            <person name="Cebula T.A."/>
        </authorList>
    </citation>
    <scope>NUCLEOTIDE SEQUENCE [LARGE SCALE GENOMIC DNA]</scope>
    <source>
        <strain>SL483</strain>
    </source>
</reference>